<keyword id="KW-0002">3D-structure</keyword>
<keyword id="KW-0963">Cytoplasm</keyword>
<keyword id="KW-0227">DNA damage</keyword>
<keyword id="KW-0233">DNA recombination</keyword>
<keyword id="KW-0234">DNA repair</keyword>
<keyword id="KW-0238">DNA-binding</keyword>
<keyword id="KW-1185">Reference proteome</keyword>
<feature type="chain" id="PRO_0000094653" description="Holliday junction branch migration complex subunit RuvA">
    <location>
        <begin position="1"/>
        <end position="196"/>
    </location>
</feature>
<feature type="region of interest" description="Domain I" evidence="2 3">
    <location>
        <begin position="1"/>
        <end position="63"/>
    </location>
</feature>
<feature type="region of interest" description="Domain II" evidence="2 3">
    <location>
        <begin position="64"/>
        <end position="138"/>
    </location>
</feature>
<feature type="region of interest" description="Flexible linker" evidence="3">
    <location>
        <begin position="139"/>
        <end position="148"/>
    </location>
</feature>
<feature type="region of interest" description="Domain III" evidence="3">
    <location>
        <begin position="146"/>
        <end position="196"/>
    </location>
</feature>
<feature type="short sequence motif" description="Acidic pin" evidence="1">
    <location>
        <begin position="54"/>
        <end position="55"/>
    </location>
</feature>
<feature type="strand" evidence="11">
    <location>
        <begin position="4"/>
        <end position="12"/>
    </location>
</feature>
<feature type="strand" evidence="11">
    <location>
        <begin position="14"/>
        <end position="21"/>
    </location>
</feature>
<feature type="strand" evidence="11">
    <location>
        <begin position="24"/>
        <end position="29"/>
    </location>
</feature>
<feature type="helix" evidence="11">
    <location>
        <begin position="32"/>
        <end position="36"/>
    </location>
</feature>
<feature type="strand" evidence="11">
    <location>
        <begin position="42"/>
        <end position="53"/>
    </location>
</feature>
<feature type="strand" evidence="11">
    <location>
        <begin position="56"/>
        <end position="63"/>
    </location>
</feature>
<feature type="helix" evidence="11">
    <location>
        <begin position="65"/>
        <end position="75"/>
    </location>
</feature>
<feature type="helix" evidence="11">
    <location>
        <begin position="82"/>
        <end position="91"/>
    </location>
</feature>
<feature type="helix" evidence="11">
    <location>
        <begin position="94"/>
        <end position="103"/>
    </location>
</feature>
<feature type="helix" evidence="11">
    <location>
        <begin position="106"/>
        <end position="110"/>
    </location>
</feature>
<feature type="helix" evidence="11">
    <location>
        <begin position="117"/>
        <end position="127"/>
    </location>
</feature>
<feature type="turn" evidence="11">
    <location>
        <begin position="128"/>
        <end position="130"/>
    </location>
</feature>
<protein>
    <recommendedName>
        <fullName evidence="2">Holliday junction branch migration complex subunit RuvA</fullName>
    </recommendedName>
</protein>
<reference key="1">
    <citation type="journal article" date="1998" name="Nature">
        <title>Deciphering the biology of Mycobacterium tuberculosis from the complete genome sequence.</title>
        <authorList>
            <person name="Cole S.T."/>
            <person name="Brosch R."/>
            <person name="Parkhill J."/>
            <person name="Garnier T."/>
            <person name="Churcher C.M."/>
            <person name="Harris D.E."/>
            <person name="Gordon S.V."/>
            <person name="Eiglmeier K."/>
            <person name="Gas S."/>
            <person name="Barry C.E. III"/>
            <person name="Tekaia F."/>
            <person name="Badcock K."/>
            <person name="Basham D."/>
            <person name="Brown D."/>
            <person name="Chillingworth T."/>
            <person name="Connor R."/>
            <person name="Davies R.M."/>
            <person name="Devlin K."/>
            <person name="Feltwell T."/>
            <person name="Gentles S."/>
            <person name="Hamlin N."/>
            <person name="Holroyd S."/>
            <person name="Hornsby T."/>
            <person name="Jagels K."/>
            <person name="Krogh A."/>
            <person name="McLean J."/>
            <person name="Moule S."/>
            <person name="Murphy L.D."/>
            <person name="Oliver S."/>
            <person name="Osborne J."/>
            <person name="Quail M.A."/>
            <person name="Rajandream M.A."/>
            <person name="Rogers J."/>
            <person name="Rutter S."/>
            <person name="Seeger K."/>
            <person name="Skelton S."/>
            <person name="Squares S."/>
            <person name="Squares R."/>
            <person name="Sulston J.E."/>
            <person name="Taylor K."/>
            <person name="Whitehead S."/>
            <person name="Barrell B.G."/>
        </authorList>
    </citation>
    <scope>NUCLEOTIDE SEQUENCE [LARGE SCALE GENOMIC DNA]</scope>
    <source>
        <strain>ATCC 25618 / H37Rv</strain>
    </source>
</reference>
<reference key="2">
    <citation type="journal article" date="2011" name="Mol. Cell. Proteomics">
        <title>Proteogenomic analysis of Mycobacterium tuberculosis by high resolution mass spectrometry.</title>
        <authorList>
            <person name="Kelkar D.S."/>
            <person name="Kumar D."/>
            <person name="Kumar P."/>
            <person name="Balakrishnan L."/>
            <person name="Muthusamy B."/>
            <person name="Yadav A.K."/>
            <person name="Shrivastava P."/>
            <person name="Marimuthu A."/>
            <person name="Anand S."/>
            <person name="Sundaram H."/>
            <person name="Kingsbury R."/>
            <person name="Harsha H.C."/>
            <person name="Nair B."/>
            <person name="Prasad T.S."/>
            <person name="Chauhan D.S."/>
            <person name="Katoch K."/>
            <person name="Katoch V.M."/>
            <person name="Kumar P."/>
            <person name="Chaerkady R."/>
            <person name="Ramachandran S."/>
            <person name="Dash D."/>
            <person name="Pandey A."/>
        </authorList>
    </citation>
    <scope>IDENTIFICATION BY MASS SPECTROMETRY [LARGE SCALE ANALYSIS]</scope>
    <source>
        <strain>ATCC 25618 / H37Rv</strain>
    </source>
</reference>
<reference key="3">
    <citation type="journal article" date="2012" name="J. Biol. Chem.">
        <title>Functional analysis of DNA replication fork reversal catalyzed by Mycobacterium tuberculosis RuvAB proteins.</title>
        <authorList>
            <person name="Khanduja J.S."/>
            <person name="Muniyappa K."/>
        </authorList>
    </citation>
    <scope>FUNCTION</scope>
    <scope>SUBUNIT</scope>
    <scope>DNA-BINDING</scope>
</reference>
<reference evidence="7" key="4">
    <citation type="journal article" date="2006" name="Acta Crystallogr. F">
        <title>Structure of Mycobacterium tuberculosis RuvA, a protein involved in recombination.</title>
        <authorList>
            <person name="Prabu J.R."/>
            <person name="Thamotharan S."/>
            <person name="Khanduja J.S."/>
            <person name="Alipio E.Z."/>
            <person name="Kim C.Y."/>
            <person name="Waldo G.S."/>
            <person name="Terwilliger T.C."/>
            <person name="Segelke B."/>
            <person name="Lekin T."/>
            <person name="Toppani D."/>
            <person name="Hung L.W."/>
            <person name="Yu M."/>
            <person name="Bursey E."/>
            <person name="Muniyappa K."/>
            <person name="Chandra N.R."/>
            <person name="Vijayan M."/>
        </authorList>
    </citation>
    <scope>X-RAY CRYSTALLOGRAPHY (2.70 ANGSTROMS)</scope>
    <scope>SUBUNIT</scope>
    <scope>DOMAIN</scope>
    <source>
        <strain>ATCC 25618 / H37Rv</strain>
    </source>
</reference>
<reference evidence="8 9 10" key="5">
    <citation type="journal article" date="2009" name="Biochim. Biophys. Acta">
        <title>Crystallographic and modelling studies on Mycobacterium tuberculosis RuvA Additional role of RuvB-binding domain and inter species variability.</title>
        <authorList>
            <person name="Prabu J.R."/>
            <person name="Thamotharan S."/>
            <person name="Khanduja J.S."/>
            <person name="Chandra N.R."/>
            <person name="Muniyappa K."/>
            <person name="Vijayan M."/>
        </authorList>
    </citation>
    <scope>X-RAY CRYSTALLOGRAPHY (2.40 ANGSTROMS)</scope>
    <scope>SUBUNIT</scope>
    <scope>DOMAIN</scope>
</reference>
<organism>
    <name type="scientific">Mycobacterium tuberculosis (strain ATCC 25618 / H37Rv)</name>
    <dbReference type="NCBI Taxonomy" id="83332"/>
    <lineage>
        <taxon>Bacteria</taxon>
        <taxon>Bacillati</taxon>
        <taxon>Actinomycetota</taxon>
        <taxon>Actinomycetes</taxon>
        <taxon>Mycobacteriales</taxon>
        <taxon>Mycobacteriaceae</taxon>
        <taxon>Mycobacterium</taxon>
        <taxon>Mycobacterium tuberculosis complex</taxon>
    </lineage>
</organism>
<name>RUVA_MYCTU</name>
<evidence type="ECO:0000250" key="1">
    <source>
        <dbReference type="UniProtKB" id="P0A809"/>
    </source>
</evidence>
<evidence type="ECO:0000255" key="2">
    <source>
        <dbReference type="HAMAP-Rule" id="MF_00031"/>
    </source>
</evidence>
<evidence type="ECO:0000269" key="3">
    <source>
    </source>
</evidence>
<evidence type="ECO:0000269" key="4">
    <source>
    </source>
</evidence>
<evidence type="ECO:0000269" key="5">
    <source>
    </source>
</evidence>
<evidence type="ECO:0000303" key="6">
    <source>
    </source>
</evidence>
<evidence type="ECO:0007744" key="7">
    <source>
        <dbReference type="PDB" id="2H5X"/>
    </source>
</evidence>
<evidence type="ECO:0007744" key="8">
    <source>
        <dbReference type="PDB" id="2ZTC"/>
    </source>
</evidence>
<evidence type="ECO:0007744" key="9">
    <source>
        <dbReference type="PDB" id="2ZTD"/>
    </source>
</evidence>
<evidence type="ECO:0007744" key="10">
    <source>
        <dbReference type="PDB" id="2ZTE"/>
    </source>
</evidence>
<evidence type="ECO:0007829" key="11">
    <source>
        <dbReference type="PDB" id="2ZTE"/>
    </source>
</evidence>
<sequence>MIASVRGEVLEVALDHVVIEAAGVGYRVNATPATLATLRQGTEARLITAMIVREDSMTLYGFPDGETRDLFLTLLSVSGVGPRLAMAALAVHDAPALRQVLADGNVAALTRVPGIGKRGAERMVLELRDKVGVAATGGALSTNGHAVRSPVVEALVGLGFAAKQAEEATDTVLAANHDATTSSALRSALSLLGKAR</sequence>
<accession>P9WGW3</accession>
<accession>L0TBQ6</accession>
<accession>P66744</accession>
<accession>Q50628</accession>
<dbReference type="EMBL" id="AL123456">
    <property type="protein sequence ID" value="CCP45389.1"/>
    <property type="molecule type" value="Genomic_DNA"/>
</dbReference>
<dbReference type="PIR" id="H70726">
    <property type="entry name" value="H70726"/>
</dbReference>
<dbReference type="RefSeq" id="NP_217109.1">
    <property type="nucleotide sequence ID" value="NC_000962.3"/>
</dbReference>
<dbReference type="RefSeq" id="WP_003413421.1">
    <property type="nucleotide sequence ID" value="NZ_NVQJ01000023.1"/>
</dbReference>
<dbReference type="PDB" id="2H5X">
    <property type="method" value="X-ray"/>
    <property type="resolution" value="2.70 A"/>
    <property type="chains" value="A/B/C/D=1-196"/>
</dbReference>
<dbReference type="PDB" id="2ZTC">
    <property type="method" value="X-ray"/>
    <property type="resolution" value="2.80 A"/>
    <property type="chains" value="A/B/C/D=1-196"/>
</dbReference>
<dbReference type="PDB" id="2ZTD">
    <property type="method" value="X-ray"/>
    <property type="resolution" value="2.40 A"/>
    <property type="chains" value="A/B=1-196"/>
</dbReference>
<dbReference type="PDB" id="2ZTE">
    <property type="method" value="X-ray"/>
    <property type="resolution" value="3.20 A"/>
    <property type="chains" value="A=1-196"/>
</dbReference>
<dbReference type="PDBsum" id="2H5X"/>
<dbReference type="PDBsum" id="2ZTC"/>
<dbReference type="PDBsum" id="2ZTD"/>
<dbReference type="PDBsum" id="2ZTE"/>
<dbReference type="SMR" id="P9WGW3"/>
<dbReference type="FunCoup" id="P9WGW3">
    <property type="interactions" value="53"/>
</dbReference>
<dbReference type="STRING" id="83332.Rv2593c"/>
<dbReference type="PaxDb" id="83332-Rv2593c"/>
<dbReference type="DNASU" id="887688"/>
<dbReference type="GeneID" id="45426595"/>
<dbReference type="GeneID" id="887688"/>
<dbReference type="KEGG" id="mtu:Rv2593c"/>
<dbReference type="KEGG" id="mtv:RVBD_2593c"/>
<dbReference type="TubercuList" id="Rv2593c"/>
<dbReference type="eggNOG" id="COG0632">
    <property type="taxonomic scope" value="Bacteria"/>
</dbReference>
<dbReference type="InParanoid" id="P9WGW3"/>
<dbReference type="OrthoDB" id="5293449at2"/>
<dbReference type="PhylomeDB" id="P9WGW3"/>
<dbReference type="BRENDA" id="3.1.21.10">
    <property type="organism ID" value="3445"/>
</dbReference>
<dbReference type="EvolutionaryTrace" id="P9WGW3"/>
<dbReference type="Proteomes" id="UP000001584">
    <property type="component" value="Chromosome"/>
</dbReference>
<dbReference type="GO" id="GO:0005737">
    <property type="term" value="C:cytoplasm"/>
    <property type="evidence" value="ECO:0007669"/>
    <property type="project" value="UniProtKB-SubCell"/>
</dbReference>
<dbReference type="GO" id="GO:0009379">
    <property type="term" value="C:Holliday junction helicase complex"/>
    <property type="evidence" value="ECO:0007669"/>
    <property type="project" value="InterPro"/>
</dbReference>
<dbReference type="GO" id="GO:0048476">
    <property type="term" value="C:Holliday junction resolvase complex"/>
    <property type="evidence" value="ECO:0007669"/>
    <property type="project" value="UniProtKB-UniRule"/>
</dbReference>
<dbReference type="GO" id="GO:0005886">
    <property type="term" value="C:plasma membrane"/>
    <property type="evidence" value="ECO:0007005"/>
    <property type="project" value="MTBBASE"/>
</dbReference>
<dbReference type="GO" id="GO:0005524">
    <property type="term" value="F:ATP binding"/>
    <property type="evidence" value="ECO:0007669"/>
    <property type="project" value="InterPro"/>
</dbReference>
<dbReference type="GO" id="GO:0000400">
    <property type="term" value="F:four-way junction DNA binding"/>
    <property type="evidence" value="ECO:0007669"/>
    <property type="project" value="UniProtKB-UniRule"/>
</dbReference>
<dbReference type="GO" id="GO:0009378">
    <property type="term" value="F:four-way junction helicase activity"/>
    <property type="evidence" value="ECO:0000314"/>
    <property type="project" value="MTBBASE"/>
</dbReference>
<dbReference type="GO" id="GO:0006974">
    <property type="term" value="P:DNA damage response"/>
    <property type="evidence" value="ECO:0000270"/>
    <property type="project" value="MTBBASE"/>
</dbReference>
<dbReference type="GO" id="GO:0000724">
    <property type="term" value="P:double-strand break repair via homologous recombination"/>
    <property type="evidence" value="ECO:0000314"/>
    <property type="project" value="MTBBASE"/>
</dbReference>
<dbReference type="GO" id="GO:0009432">
    <property type="term" value="P:SOS response"/>
    <property type="evidence" value="ECO:0000318"/>
    <property type="project" value="GO_Central"/>
</dbReference>
<dbReference type="CDD" id="cd14332">
    <property type="entry name" value="UBA_RuvA_C"/>
    <property type="match status" value="1"/>
</dbReference>
<dbReference type="FunFam" id="1.10.150.20:FF:000093">
    <property type="entry name" value="Holliday junction ATP-dependent DNA helicase RuvA"/>
    <property type="match status" value="1"/>
</dbReference>
<dbReference type="FunFam" id="2.40.50.140:FF:000083">
    <property type="entry name" value="Holliday junction ATP-dependent DNA helicase RuvA"/>
    <property type="match status" value="1"/>
</dbReference>
<dbReference type="Gene3D" id="1.10.150.20">
    <property type="entry name" value="5' to 3' exonuclease, C-terminal subdomain"/>
    <property type="match status" value="1"/>
</dbReference>
<dbReference type="Gene3D" id="1.10.8.10">
    <property type="entry name" value="DNA helicase RuvA subunit, C-terminal domain"/>
    <property type="match status" value="1"/>
</dbReference>
<dbReference type="Gene3D" id="2.40.50.140">
    <property type="entry name" value="Nucleic acid-binding proteins"/>
    <property type="match status" value="1"/>
</dbReference>
<dbReference type="HAMAP" id="MF_00031">
    <property type="entry name" value="DNA_HJ_migration_RuvA"/>
    <property type="match status" value="1"/>
</dbReference>
<dbReference type="InterPro" id="IPR013849">
    <property type="entry name" value="DNA_helicase_Holl-junc_RuvA_I"/>
</dbReference>
<dbReference type="InterPro" id="IPR003583">
    <property type="entry name" value="Hlx-hairpin-Hlx_DNA-bd_motif"/>
</dbReference>
<dbReference type="InterPro" id="IPR012340">
    <property type="entry name" value="NA-bd_OB-fold"/>
</dbReference>
<dbReference type="InterPro" id="IPR000085">
    <property type="entry name" value="RuvA"/>
</dbReference>
<dbReference type="InterPro" id="IPR010994">
    <property type="entry name" value="RuvA_2-like"/>
</dbReference>
<dbReference type="InterPro" id="IPR011114">
    <property type="entry name" value="RuvA_C"/>
</dbReference>
<dbReference type="InterPro" id="IPR036267">
    <property type="entry name" value="RuvA_C_sf"/>
</dbReference>
<dbReference type="NCBIfam" id="TIGR00084">
    <property type="entry name" value="ruvA"/>
    <property type="match status" value="1"/>
</dbReference>
<dbReference type="Pfam" id="PF14520">
    <property type="entry name" value="HHH_5"/>
    <property type="match status" value="1"/>
</dbReference>
<dbReference type="Pfam" id="PF07499">
    <property type="entry name" value="RuvA_C"/>
    <property type="match status" value="1"/>
</dbReference>
<dbReference type="Pfam" id="PF01330">
    <property type="entry name" value="RuvA_N"/>
    <property type="match status" value="1"/>
</dbReference>
<dbReference type="SMART" id="SM00278">
    <property type="entry name" value="HhH1"/>
    <property type="match status" value="2"/>
</dbReference>
<dbReference type="SUPFAM" id="SSF46929">
    <property type="entry name" value="DNA helicase RuvA subunit, C-terminal domain"/>
    <property type="match status" value="1"/>
</dbReference>
<dbReference type="SUPFAM" id="SSF50249">
    <property type="entry name" value="Nucleic acid-binding proteins"/>
    <property type="match status" value="1"/>
</dbReference>
<dbReference type="SUPFAM" id="SSF47781">
    <property type="entry name" value="RuvA domain 2-like"/>
    <property type="match status" value="1"/>
</dbReference>
<gene>
    <name evidence="2 6" type="primary">ruvA</name>
    <name type="ordered locus">Rv2593c</name>
    <name type="ORF">MTCY227.08</name>
</gene>
<proteinExistence type="evidence at protein level"/>
<comment type="function">
    <text evidence="2 5">The RuvA-RuvB-RuvC complex processes Holliday junction (HJ) DNA during genetic recombination and DNA repair, while the RuvA-RuvB complex plays an important role in the rescue of blocked DNA replication forks via replication fork reversal (RFR). Binds HJ DNA (PubMed:22094465). RuvA specifically binds to HJ cruciform DNA, conferring on it an open structure. The RuvB hexamer acts as an ATP-dependent pump, pulling dsDNA into and through the RuvAB complex. HJ branch migration allows RuvC to scan DNA until it finds its consensus sequence, where it cleaves and resolves the cruciform DNA.</text>
</comment>
<comment type="subunit">
    <text evidence="2 3 4">Homotetramer; forms a dimer of tetramers with an internal space large enough to bind the Holliday junction DNA (PubMed:16880543, PubMed:19374958). Forms an RuvA(8)-RuvB(12)-Holliday junction (HJ) complex. HJ DNA is sandwiched between 2 RuvA tetramers; dsDNA enters through RuvA and exits via RuvB. An RuvB hexamer assembles on each DNA strand where it exits the tetramer. Each RuvB hexamer is contacted by two RuvA subunits (via domain III) on 2 adjacent RuvB subunits; this complex drives branch migration. In the full resolvosome a probable DNA-RuvA(4)-RuvB(12)-RuvC(2) complex forms which resolves the HJ.</text>
</comment>
<comment type="subcellular location">
    <subcellularLocation>
        <location evidence="2">Cytoplasm</location>
    </subcellularLocation>
</comment>
<comment type="domain">
    <text evidence="3 4">Has three domains with a flexible linker between the domains II and III, and assumes an 'L' shape. The position of domain III with respect to the tetramer is variable.</text>
</comment>
<comment type="similarity">
    <text evidence="2">Belongs to the RuvA family.</text>
</comment>